<evidence type="ECO:0000255" key="1">
    <source>
        <dbReference type="HAMAP-Rule" id="MF_00260"/>
    </source>
</evidence>
<keyword id="KW-0627">Porphyrin biosynthesis</keyword>
<keyword id="KW-1185">Reference proteome</keyword>
<keyword id="KW-0808">Transferase</keyword>
<sequence>MALKTLRIGTRASQLALWQANWVKSELEKRYPGLEVSLLKIKTIGDKILDVPLAQVGGKGLFVKEIEEAMLRGDIDIAVHSMKDVPTEFPEGLGLHCITEREDPRDAVISRGIKFADLPKGAKIGTSALRRQAQLLKIRPDMEMVIIRGNVETRINKLEAENLDAVILAAAGLKRLGFTDKVAEYLPTDLSIPAIGQGALGIECRLDNEEVKSAIDFFNHPATAYAVRAERALLWRCEGGCQVPIAAFGEVEGDQLKLTGFIASVDGKTSVKGSVSGPAEECEKLGITLAEQLLKDGGHEILAEVYQREVSREKEIPV</sequence>
<protein>
    <recommendedName>
        <fullName evidence="1">Porphobilinogen deaminase</fullName>
        <shortName evidence="1">PBG</shortName>
        <ecNumber evidence="1">2.5.1.61</ecNumber>
    </recommendedName>
    <alternativeName>
        <fullName evidence="1">Hydroxymethylbilane synthase</fullName>
        <shortName evidence="1">HMBS</shortName>
    </alternativeName>
    <alternativeName>
        <fullName evidence="1">Pre-uroporphyrinogen synthase</fullName>
    </alternativeName>
</protein>
<feature type="chain" id="PRO_1000078610" description="Porphobilinogen deaminase">
    <location>
        <begin position="1"/>
        <end position="318"/>
    </location>
</feature>
<feature type="modified residue" description="S-(dipyrrolylmethanemethyl)cysteine" evidence="1">
    <location>
        <position position="241"/>
    </location>
</feature>
<organism>
    <name type="scientific">Geotalea uraniireducens (strain Rf4)</name>
    <name type="common">Geobacter uraniireducens</name>
    <dbReference type="NCBI Taxonomy" id="351605"/>
    <lineage>
        <taxon>Bacteria</taxon>
        <taxon>Pseudomonadati</taxon>
        <taxon>Thermodesulfobacteriota</taxon>
        <taxon>Desulfuromonadia</taxon>
        <taxon>Geobacterales</taxon>
        <taxon>Geobacteraceae</taxon>
        <taxon>Geotalea</taxon>
    </lineage>
</organism>
<proteinExistence type="inferred from homology"/>
<accession>A5GCW2</accession>
<gene>
    <name evidence="1" type="primary">hemC</name>
    <name type="ordered locus">Gura_0359</name>
</gene>
<reference key="1">
    <citation type="submission" date="2007-05" db="EMBL/GenBank/DDBJ databases">
        <title>Complete sequence of Geobacter uraniireducens Rf4.</title>
        <authorList>
            <consortium name="US DOE Joint Genome Institute"/>
            <person name="Copeland A."/>
            <person name="Lucas S."/>
            <person name="Lapidus A."/>
            <person name="Barry K."/>
            <person name="Detter J.C."/>
            <person name="Glavina del Rio T."/>
            <person name="Hammon N."/>
            <person name="Israni S."/>
            <person name="Dalin E."/>
            <person name="Tice H."/>
            <person name="Pitluck S."/>
            <person name="Chertkov O."/>
            <person name="Brettin T."/>
            <person name="Bruce D."/>
            <person name="Han C."/>
            <person name="Schmutz J."/>
            <person name="Larimer F."/>
            <person name="Land M."/>
            <person name="Hauser L."/>
            <person name="Kyrpides N."/>
            <person name="Mikhailova N."/>
            <person name="Shelobolina E."/>
            <person name="Aklujkar M."/>
            <person name="Lovley D."/>
            <person name="Richardson P."/>
        </authorList>
    </citation>
    <scope>NUCLEOTIDE SEQUENCE [LARGE SCALE GENOMIC DNA]</scope>
    <source>
        <strain>ATCC BAA-1134 / JCM 13001 / Rf4</strain>
    </source>
</reference>
<dbReference type="EC" id="2.5.1.61" evidence="1"/>
<dbReference type="EMBL" id="CP000698">
    <property type="protein sequence ID" value="ABQ24575.1"/>
    <property type="molecule type" value="Genomic_DNA"/>
</dbReference>
<dbReference type="RefSeq" id="WP_011937301.1">
    <property type="nucleotide sequence ID" value="NC_009483.1"/>
</dbReference>
<dbReference type="SMR" id="A5GCW2"/>
<dbReference type="STRING" id="351605.Gura_0359"/>
<dbReference type="KEGG" id="gur:Gura_0359"/>
<dbReference type="HOGENOM" id="CLU_019704_0_2_7"/>
<dbReference type="OrthoDB" id="9810298at2"/>
<dbReference type="UniPathway" id="UPA00251">
    <property type="reaction ID" value="UER00319"/>
</dbReference>
<dbReference type="Proteomes" id="UP000006695">
    <property type="component" value="Chromosome"/>
</dbReference>
<dbReference type="GO" id="GO:0005737">
    <property type="term" value="C:cytoplasm"/>
    <property type="evidence" value="ECO:0007669"/>
    <property type="project" value="TreeGrafter"/>
</dbReference>
<dbReference type="GO" id="GO:0004418">
    <property type="term" value="F:hydroxymethylbilane synthase activity"/>
    <property type="evidence" value="ECO:0007669"/>
    <property type="project" value="UniProtKB-UniRule"/>
</dbReference>
<dbReference type="GO" id="GO:0006782">
    <property type="term" value="P:protoporphyrinogen IX biosynthetic process"/>
    <property type="evidence" value="ECO:0007669"/>
    <property type="project" value="UniProtKB-UniRule"/>
</dbReference>
<dbReference type="CDD" id="cd13646">
    <property type="entry name" value="PBP2_EcHMBS_like"/>
    <property type="match status" value="1"/>
</dbReference>
<dbReference type="FunFam" id="3.30.160.40:FF:000002">
    <property type="entry name" value="Porphobilinogen deaminase"/>
    <property type="match status" value="1"/>
</dbReference>
<dbReference type="FunFam" id="3.40.190.10:FF:000004">
    <property type="entry name" value="Porphobilinogen deaminase"/>
    <property type="match status" value="1"/>
</dbReference>
<dbReference type="FunFam" id="3.40.190.10:FF:000005">
    <property type="entry name" value="Porphobilinogen deaminase"/>
    <property type="match status" value="1"/>
</dbReference>
<dbReference type="Gene3D" id="3.40.190.10">
    <property type="entry name" value="Periplasmic binding protein-like II"/>
    <property type="match status" value="2"/>
</dbReference>
<dbReference type="Gene3D" id="3.30.160.40">
    <property type="entry name" value="Porphobilinogen deaminase, C-terminal domain"/>
    <property type="match status" value="1"/>
</dbReference>
<dbReference type="HAMAP" id="MF_00260">
    <property type="entry name" value="Porphobil_deam"/>
    <property type="match status" value="1"/>
</dbReference>
<dbReference type="InterPro" id="IPR000860">
    <property type="entry name" value="HemC"/>
</dbReference>
<dbReference type="InterPro" id="IPR022419">
    <property type="entry name" value="Porphobilin_deaminase_cofac_BS"/>
</dbReference>
<dbReference type="InterPro" id="IPR022417">
    <property type="entry name" value="Porphobilin_deaminase_N"/>
</dbReference>
<dbReference type="InterPro" id="IPR022418">
    <property type="entry name" value="Porphobilinogen_deaminase_C"/>
</dbReference>
<dbReference type="InterPro" id="IPR036803">
    <property type="entry name" value="Porphobilinogen_deaminase_C_sf"/>
</dbReference>
<dbReference type="NCBIfam" id="TIGR00212">
    <property type="entry name" value="hemC"/>
    <property type="match status" value="1"/>
</dbReference>
<dbReference type="PANTHER" id="PTHR11557">
    <property type="entry name" value="PORPHOBILINOGEN DEAMINASE"/>
    <property type="match status" value="1"/>
</dbReference>
<dbReference type="PANTHER" id="PTHR11557:SF0">
    <property type="entry name" value="PORPHOBILINOGEN DEAMINASE"/>
    <property type="match status" value="1"/>
</dbReference>
<dbReference type="Pfam" id="PF01379">
    <property type="entry name" value="Porphobil_deam"/>
    <property type="match status" value="1"/>
</dbReference>
<dbReference type="Pfam" id="PF03900">
    <property type="entry name" value="Porphobil_deamC"/>
    <property type="match status" value="1"/>
</dbReference>
<dbReference type="PIRSF" id="PIRSF001438">
    <property type="entry name" value="4pyrrol_synth_OHMeBilane_synth"/>
    <property type="match status" value="1"/>
</dbReference>
<dbReference type="PRINTS" id="PR00151">
    <property type="entry name" value="PORPHBDMNASE"/>
</dbReference>
<dbReference type="SUPFAM" id="SSF53850">
    <property type="entry name" value="Periplasmic binding protein-like II"/>
    <property type="match status" value="1"/>
</dbReference>
<dbReference type="SUPFAM" id="SSF54782">
    <property type="entry name" value="Porphobilinogen deaminase (hydroxymethylbilane synthase), C-terminal domain"/>
    <property type="match status" value="1"/>
</dbReference>
<dbReference type="PROSITE" id="PS00533">
    <property type="entry name" value="PORPHOBILINOGEN_DEAM"/>
    <property type="match status" value="1"/>
</dbReference>
<comment type="function">
    <text evidence="1">Tetrapolymerization of the monopyrrole PBG into the hydroxymethylbilane pre-uroporphyrinogen in several discrete steps.</text>
</comment>
<comment type="catalytic activity">
    <reaction evidence="1">
        <text>4 porphobilinogen + H2O = hydroxymethylbilane + 4 NH4(+)</text>
        <dbReference type="Rhea" id="RHEA:13185"/>
        <dbReference type="ChEBI" id="CHEBI:15377"/>
        <dbReference type="ChEBI" id="CHEBI:28938"/>
        <dbReference type="ChEBI" id="CHEBI:57845"/>
        <dbReference type="ChEBI" id="CHEBI:58126"/>
        <dbReference type="EC" id="2.5.1.61"/>
    </reaction>
</comment>
<comment type="cofactor">
    <cofactor evidence="1">
        <name>dipyrromethane</name>
        <dbReference type="ChEBI" id="CHEBI:60342"/>
    </cofactor>
    <text evidence="1">Binds 1 dipyrromethane group covalently.</text>
</comment>
<comment type="pathway">
    <text evidence="1">Porphyrin-containing compound metabolism; protoporphyrin-IX biosynthesis; coproporphyrinogen-III from 5-aminolevulinate: step 2/4.</text>
</comment>
<comment type="subunit">
    <text evidence="1">Monomer.</text>
</comment>
<comment type="miscellaneous">
    <text evidence="1">The porphobilinogen subunits are added to the dipyrromethane group.</text>
</comment>
<comment type="similarity">
    <text evidence="1">Belongs to the HMBS family.</text>
</comment>
<name>HEM3_GEOUR</name>